<reference key="1">
    <citation type="journal article" date="2000" name="Genomics">
        <title>Characterization of the human TESTIN gene localized in the FRA7G region at 7q31.2.</title>
        <authorList>
            <person name="Tatarelli C."/>
            <person name="Linnenbach A."/>
            <person name="Mimori K."/>
            <person name="Croce C.M."/>
        </authorList>
    </citation>
    <scope>NUCLEOTIDE SEQUENCE [GENOMIC DNA / MRNA] (ISOFORMS 1 AND 2)</scope>
</reference>
<reference key="2">
    <citation type="journal article" date="2001" name="Oncogene">
        <title>The TES gene at 7q31.1 is methylated in tumours and encodes a novel growth-suppressing LIM domain protein.</title>
        <authorList>
            <person name="Tobias E.S."/>
            <person name="Hurlstone A.F.L."/>
            <person name="MacKenzie E."/>
            <person name="McFarlane R."/>
            <person name="Black D.M."/>
        </authorList>
    </citation>
    <scope>NUCLEOTIDE SEQUENCE [MRNA] (ISOFORM 1)</scope>
    <scope>FUNCTION</scope>
    <scope>TISSUE SPECIFICITY</scope>
</reference>
<reference key="3">
    <citation type="journal article" date="2004" name="Nat. Genet.">
        <title>Complete sequencing and characterization of 21,243 full-length human cDNAs.</title>
        <authorList>
            <person name="Ota T."/>
            <person name="Suzuki Y."/>
            <person name="Nishikawa T."/>
            <person name="Otsuki T."/>
            <person name="Sugiyama T."/>
            <person name="Irie R."/>
            <person name="Wakamatsu A."/>
            <person name="Hayashi K."/>
            <person name="Sato H."/>
            <person name="Nagai K."/>
            <person name="Kimura K."/>
            <person name="Makita H."/>
            <person name="Sekine M."/>
            <person name="Obayashi M."/>
            <person name="Nishi T."/>
            <person name="Shibahara T."/>
            <person name="Tanaka T."/>
            <person name="Ishii S."/>
            <person name="Yamamoto J."/>
            <person name="Saito K."/>
            <person name="Kawai Y."/>
            <person name="Isono Y."/>
            <person name="Nakamura Y."/>
            <person name="Nagahari K."/>
            <person name="Murakami K."/>
            <person name="Yasuda T."/>
            <person name="Iwayanagi T."/>
            <person name="Wagatsuma M."/>
            <person name="Shiratori A."/>
            <person name="Sudo H."/>
            <person name="Hosoiri T."/>
            <person name="Kaku Y."/>
            <person name="Kodaira H."/>
            <person name="Kondo H."/>
            <person name="Sugawara M."/>
            <person name="Takahashi M."/>
            <person name="Kanda K."/>
            <person name="Yokoi T."/>
            <person name="Furuya T."/>
            <person name="Kikkawa E."/>
            <person name="Omura Y."/>
            <person name="Abe K."/>
            <person name="Kamihara K."/>
            <person name="Katsuta N."/>
            <person name="Sato K."/>
            <person name="Tanikawa M."/>
            <person name="Yamazaki M."/>
            <person name="Ninomiya K."/>
            <person name="Ishibashi T."/>
            <person name="Yamashita H."/>
            <person name="Murakawa K."/>
            <person name="Fujimori K."/>
            <person name="Tanai H."/>
            <person name="Kimata M."/>
            <person name="Watanabe M."/>
            <person name="Hiraoka S."/>
            <person name="Chiba Y."/>
            <person name="Ishida S."/>
            <person name="Ono Y."/>
            <person name="Takiguchi S."/>
            <person name="Watanabe S."/>
            <person name="Yosida M."/>
            <person name="Hotuta T."/>
            <person name="Kusano J."/>
            <person name="Kanehori K."/>
            <person name="Takahashi-Fujii A."/>
            <person name="Hara H."/>
            <person name="Tanase T.-O."/>
            <person name="Nomura Y."/>
            <person name="Togiya S."/>
            <person name="Komai F."/>
            <person name="Hara R."/>
            <person name="Takeuchi K."/>
            <person name="Arita M."/>
            <person name="Imose N."/>
            <person name="Musashino K."/>
            <person name="Yuuki H."/>
            <person name="Oshima A."/>
            <person name="Sasaki N."/>
            <person name="Aotsuka S."/>
            <person name="Yoshikawa Y."/>
            <person name="Matsunawa H."/>
            <person name="Ichihara T."/>
            <person name="Shiohata N."/>
            <person name="Sano S."/>
            <person name="Moriya S."/>
            <person name="Momiyama H."/>
            <person name="Satoh N."/>
            <person name="Takami S."/>
            <person name="Terashima Y."/>
            <person name="Suzuki O."/>
            <person name="Nakagawa S."/>
            <person name="Senoh A."/>
            <person name="Mizoguchi H."/>
            <person name="Goto Y."/>
            <person name="Shimizu F."/>
            <person name="Wakebe H."/>
            <person name="Hishigaki H."/>
            <person name="Watanabe T."/>
            <person name="Sugiyama A."/>
            <person name="Takemoto M."/>
            <person name="Kawakami B."/>
            <person name="Yamazaki M."/>
            <person name="Watanabe K."/>
            <person name="Kumagai A."/>
            <person name="Itakura S."/>
            <person name="Fukuzumi Y."/>
            <person name="Fujimori Y."/>
            <person name="Komiyama M."/>
            <person name="Tashiro H."/>
            <person name="Tanigami A."/>
            <person name="Fujiwara T."/>
            <person name="Ono T."/>
            <person name="Yamada K."/>
            <person name="Fujii Y."/>
            <person name="Ozaki K."/>
            <person name="Hirao M."/>
            <person name="Ohmori Y."/>
            <person name="Kawabata A."/>
            <person name="Hikiji T."/>
            <person name="Kobatake N."/>
            <person name="Inagaki H."/>
            <person name="Ikema Y."/>
            <person name="Okamoto S."/>
            <person name="Okitani R."/>
            <person name="Kawakami T."/>
            <person name="Noguchi S."/>
            <person name="Itoh T."/>
            <person name="Shigeta K."/>
            <person name="Senba T."/>
            <person name="Matsumura K."/>
            <person name="Nakajima Y."/>
            <person name="Mizuno T."/>
            <person name="Morinaga M."/>
            <person name="Sasaki M."/>
            <person name="Togashi T."/>
            <person name="Oyama M."/>
            <person name="Hata H."/>
            <person name="Watanabe M."/>
            <person name="Komatsu T."/>
            <person name="Mizushima-Sugano J."/>
            <person name="Satoh T."/>
            <person name="Shirai Y."/>
            <person name="Takahashi Y."/>
            <person name="Nakagawa K."/>
            <person name="Okumura K."/>
            <person name="Nagase T."/>
            <person name="Nomura N."/>
            <person name="Kikuchi H."/>
            <person name="Masuho Y."/>
            <person name="Yamashita R."/>
            <person name="Nakai K."/>
            <person name="Yada T."/>
            <person name="Nakamura Y."/>
            <person name="Ohara O."/>
            <person name="Isogai T."/>
            <person name="Sugano S."/>
        </authorList>
    </citation>
    <scope>NUCLEOTIDE SEQUENCE [LARGE SCALE MRNA] (ISOFORMS 1 AND 2)</scope>
    <source>
        <tissue>Embryo</tissue>
        <tissue>Prostate</tissue>
    </source>
</reference>
<reference key="4">
    <citation type="journal article" date="2003" name="Science">
        <title>Human chromosome 7: DNA sequence and biology.</title>
        <authorList>
            <person name="Scherer S.W."/>
            <person name="Cheung J."/>
            <person name="MacDonald J.R."/>
            <person name="Osborne L.R."/>
            <person name="Nakabayashi K."/>
            <person name="Herbrick J.-A."/>
            <person name="Carson A.R."/>
            <person name="Parker-Katiraee L."/>
            <person name="Skaug J."/>
            <person name="Khaja R."/>
            <person name="Zhang J."/>
            <person name="Hudek A.K."/>
            <person name="Li M."/>
            <person name="Haddad M."/>
            <person name="Duggan G.E."/>
            <person name="Fernandez B.A."/>
            <person name="Kanematsu E."/>
            <person name="Gentles S."/>
            <person name="Christopoulos C.C."/>
            <person name="Choufani S."/>
            <person name="Kwasnicka D."/>
            <person name="Zheng X.H."/>
            <person name="Lai Z."/>
            <person name="Nusskern D.R."/>
            <person name="Zhang Q."/>
            <person name="Gu Z."/>
            <person name="Lu F."/>
            <person name="Zeesman S."/>
            <person name="Nowaczyk M.J."/>
            <person name="Teshima I."/>
            <person name="Chitayat D."/>
            <person name="Shuman C."/>
            <person name="Weksberg R."/>
            <person name="Zackai E.H."/>
            <person name="Grebe T.A."/>
            <person name="Cox S.R."/>
            <person name="Kirkpatrick S.J."/>
            <person name="Rahman N."/>
            <person name="Friedman J.M."/>
            <person name="Heng H.H.Q."/>
            <person name="Pelicci P.G."/>
            <person name="Lo-Coco F."/>
            <person name="Belloni E."/>
            <person name="Shaffer L.G."/>
            <person name="Pober B."/>
            <person name="Morton C.C."/>
            <person name="Gusella J.F."/>
            <person name="Bruns G.A.P."/>
            <person name="Korf B.R."/>
            <person name="Quade B.J."/>
            <person name="Ligon A.H."/>
            <person name="Ferguson H."/>
            <person name="Higgins A.W."/>
            <person name="Leach N.T."/>
            <person name="Herrick S.R."/>
            <person name="Lemyre E."/>
            <person name="Farra C.G."/>
            <person name="Kim H.-G."/>
            <person name="Summers A.M."/>
            <person name="Gripp K.W."/>
            <person name="Roberts W."/>
            <person name="Szatmari P."/>
            <person name="Winsor E.J.T."/>
            <person name="Grzeschik K.-H."/>
            <person name="Teebi A."/>
            <person name="Minassian B.A."/>
            <person name="Kere J."/>
            <person name="Armengol L."/>
            <person name="Pujana M.A."/>
            <person name="Estivill X."/>
            <person name="Wilson M.D."/>
            <person name="Koop B.F."/>
            <person name="Tosi S."/>
            <person name="Moore G.E."/>
            <person name="Boright A.P."/>
            <person name="Zlotorynski E."/>
            <person name="Kerem B."/>
            <person name="Kroisel P.M."/>
            <person name="Petek E."/>
            <person name="Oscier D.G."/>
            <person name="Mould S.J."/>
            <person name="Doehner H."/>
            <person name="Doehner K."/>
            <person name="Rommens J.M."/>
            <person name="Vincent J.B."/>
            <person name="Venter J.C."/>
            <person name="Li P.W."/>
            <person name="Mural R.J."/>
            <person name="Adams M.D."/>
            <person name="Tsui L.-C."/>
        </authorList>
    </citation>
    <scope>NUCLEOTIDE SEQUENCE [LARGE SCALE GENOMIC DNA]</scope>
</reference>
<reference key="5">
    <citation type="journal article" date="2003" name="Nature">
        <title>The DNA sequence of human chromosome 7.</title>
        <authorList>
            <person name="Hillier L.W."/>
            <person name="Fulton R.S."/>
            <person name="Fulton L.A."/>
            <person name="Graves T.A."/>
            <person name="Pepin K.H."/>
            <person name="Wagner-McPherson C."/>
            <person name="Layman D."/>
            <person name="Maas J."/>
            <person name="Jaeger S."/>
            <person name="Walker R."/>
            <person name="Wylie K."/>
            <person name="Sekhon M."/>
            <person name="Becker M.C."/>
            <person name="O'Laughlin M.D."/>
            <person name="Schaller M.E."/>
            <person name="Fewell G.A."/>
            <person name="Delehaunty K.D."/>
            <person name="Miner T.L."/>
            <person name="Nash W.E."/>
            <person name="Cordes M."/>
            <person name="Du H."/>
            <person name="Sun H."/>
            <person name="Edwards J."/>
            <person name="Bradshaw-Cordum H."/>
            <person name="Ali J."/>
            <person name="Andrews S."/>
            <person name="Isak A."/>
            <person name="Vanbrunt A."/>
            <person name="Nguyen C."/>
            <person name="Du F."/>
            <person name="Lamar B."/>
            <person name="Courtney L."/>
            <person name="Kalicki J."/>
            <person name="Ozersky P."/>
            <person name="Bielicki L."/>
            <person name="Scott K."/>
            <person name="Holmes A."/>
            <person name="Harkins R."/>
            <person name="Harris A."/>
            <person name="Strong C.M."/>
            <person name="Hou S."/>
            <person name="Tomlinson C."/>
            <person name="Dauphin-Kohlberg S."/>
            <person name="Kozlowicz-Reilly A."/>
            <person name="Leonard S."/>
            <person name="Rohlfing T."/>
            <person name="Rock S.M."/>
            <person name="Tin-Wollam A.-M."/>
            <person name="Abbott A."/>
            <person name="Minx P."/>
            <person name="Maupin R."/>
            <person name="Strowmatt C."/>
            <person name="Latreille P."/>
            <person name="Miller N."/>
            <person name="Johnson D."/>
            <person name="Murray J."/>
            <person name="Woessner J.P."/>
            <person name="Wendl M.C."/>
            <person name="Yang S.-P."/>
            <person name="Schultz B.R."/>
            <person name="Wallis J.W."/>
            <person name="Spieth J."/>
            <person name="Bieri T.A."/>
            <person name="Nelson J.O."/>
            <person name="Berkowicz N."/>
            <person name="Wohldmann P.E."/>
            <person name="Cook L.L."/>
            <person name="Hickenbotham M.T."/>
            <person name="Eldred J."/>
            <person name="Williams D."/>
            <person name="Bedell J.A."/>
            <person name="Mardis E.R."/>
            <person name="Clifton S.W."/>
            <person name="Chissoe S.L."/>
            <person name="Marra M.A."/>
            <person name="Raymond C."/>
            <person name="Haugen E."/>
            <person name="Gillett W."/>
            <person name="Zhou Y."/>
            <person name="James R."/>
            <person name="Phelps K."/>
            <person name="Iadanoto S."/>
            <person name="Bubb K."/>
            <person name="Simms E."/>
            <person name="Levy R."/>
            <person name="Clendenning J."/>
            <person name="Kaul R."/>
            <person name="Kent W.J."/>
            <person name="Furey T.S."/>
            <person name="Baertsch R.A."/>
            <person name="Brent M.R."/>
            <person name="Keibler E."/>
            <person name="Flicek P."/>
            <person name="Bork P."/>
            <person name="Suyama M."/>
            <person name="Bailey J.A."/>
            <person name="Portnoy M.E."/>
            <person name="Torrents D."/>
            <person name="Chinwalla A.T."/>
            <person name="Gish W.R."/>
            <person name="Eddy S.R."/>
            <person name="McPherson J.D."/>
            <person name="Olson M.V."/>
            <person name="Eichler E.E."/>
            <person name="Green E.D."/>
            <person name="Waterston R.H."/>
            <person name="Wilson R.K."/>
        </authorList>
    </citation>
    <scope>NUCLEOTIDE SEQUENCE [LARGE SCALE GENOMIC DNA]</scope>
</reference>
<reference key="6">
    <citation type="journal article" date="2004" name="Genome Res.">
        <title>The status, quality, and expansion of the NIH full-length cDNA project: the Mammalian Gene Collection (MGC).</title>
        <authorList>
            <consortium name="The MGC Project Team"/>
        </authorList>
    </citation>
    <scope>NUCLEOTIDE SEQUENCE [LARGE SCALE MRNA] (ISOFORM 1)</scope>
    <source>
        <tissue>Placenta</tissue>
    </source>
</reference>
<reference key="7">
    <citation type="journal article" date="2003" name="J. Cell Biol.">
        <title>The conformational state of Tes regulates its zyxin-dependent recruitment to focal adhesions.</title>
        <authorList>
            <person name="Garvalov B.K."/>
            <person name="Higgins T.E."/>
            <person name="Sutherland J.D."/>
            <person name="Zettl M."/>
            <person name="Scaplehorn N."/>
            <person name="Koecher T."/>
            <person name="Piddini E."/>
            <person name="Griffiths G."/>
            <person name="Way M."/>
        </authorList>
    </citation>
    <scope>FUNCTION</scope>
    <scope>SUBCELLULAR LOCATION</scope>
    <scope>DOMAIN</scope>
    <scope>MUTAGENESIS OF CYS-391</scope>
    <scope>INTERACTION WITH ENAH; ZYX; VASP; ACTIN FIBERS; ALPHA-ACTININ AND PXN</scope>
</reference>
<reference key="8">
    <citation type="journal article" date="2003" name="J. Cell Sci.">
        <title>TES is a novel focal adhesion protein with a role in cell spreading.</title>
        <authorList>
            <person name="Coutts A.S."/>
            <person name="MacKenzie E."/>
            <person name="Griffith E."/>
            <person name="Black D.M."/>
        </authorList>
    </citation>
    <scope>FUNCTION</scope>
    <scope>INTERACTION WITH ZYX; GRIP1; ENAH AND TALIN</scope>
    <scope>SUBCELLULAR LOCATION</scope>
</reference>
<reference key="9">
    <citation type="journal article" date="2011" name="BMC Syst. Biol.">
        <title>Initial characterization of the human central proteome.</title>
        <authorList>
            <person name="Burkard T.R."/>
            <person name="Planyavsky M."/>
            <person name="Kaupe I."/>
            <person name="Breitwieser F.P."/>
            <person name="Buerckstuemmer T."/>
            <person name="Bennett K.L."/>
            <person name="Superti-Furga G."/>
            <person name="Colinge J."/>
        </authorList>
    </citation>
    <scope>IDENTIFICATION BY MASS SPECTROMETRY [LARGE SCALE ANALYSIS]</scope>
</reference>
<reference key="10">
    <citation type="journal article" date="2012" name="PLoS ONE">
        <title>Human ALKBH4 interacts with proteins associated with transcription.</title>
        <authorList>
            <person name="Bjornstad L.G."/>
            <person name="Meza T.J."/>
            <person name="Otterlei M."/>
            <person name="Olafsrud S.M."/>
            <person name="Meza-Zepeda L.A."/>
            <person name="Falnes P.O."/>
        </authorList>
    </citation>
    <scope>INTERACTION WITH ALKBH4</scope>
</reference>
<reference key="11">
    <citation type="journal article" date="2007" name="Mol. Cell">
        <title>Tes, a specific Mena interacting partner, breaks the rules for EVH1 binding.</title>
        <authorList>
            <person name="Boeda B."/>
            <person name="Briggs D.C."/>
            <person name="Higgins T."/>
            <person name="Garvalov B.K."/>
            <person name="Fadden A.J."/>
            <person name="McDonald N.Q."/>
            <person name="Way M."/>
        </authorList>
    </citation>
    <scope>X-RAY CRYSTALLOGRAPHY (2.35 ANGSTROMS) OF 357-421 IN COMPLEX WITH ZINC IONS AND ENAH</scope>
</reference>
<reference key="12">
    <citation type="journal article" date="2011" name="J. Biol. Chem.">
        <title>Molecular recognition of the Tes LIM2-3 domains by the actin-related protein Arp7A.</title>
        <authorList>
            <person name="Boeda B."/>
            <person name="Knowles P.P."/>
            <person name="Briggs D.C."/>
            <person name="Murray-Rust J."/>
            <person name="Soriano E."/>
            <person name="Garvalov B.K."/>
            <person name="McDonald N.Q."/>
            <person name="Way M."/>
        </authorList>
    </citation>
    <scope>X-RAY CRYSTALLOGRAPHY (2.62 ANGSTROMS) OF 296-421 IN COMPLEX WITH ZINC IONS; ENAH AND ACTL7A</scope>
    <scope>MUTAGENESIS OF CYS-328</scope>
    <scope>SUBUNIT</scope>
</reference>
<accession>Q9UGI8</accession>
<accession>A4D0U6</accession>
<accession>Q9GZQ1</accession>
<accession>Q9HAJ9</accession>
<evidence type="ECO:0000255" key="1">
    <source>
        <dbReference type="PROSITE-ProRule" id="PRU00125"/>
    </source>
</evidence>
<evidence type="ECO:0000255" key="2">
    <source>
        <dbReference type="PROSITE-ProRule" id="PRU00636"/>
    </source>
</evidence>
<evidence type="ECO:0000256" key="3">
    <source>
        <dbReference type="SAM" id="MobiDB-lite"/>
    </source>
</evidence>
<evidence type="ECO:0000269" key="4">
    <source>
    </source>
</evidence>
<evidence type="ECO:0000269" key="5">
    <source>
    </source>
</evidence>
<evidence type="ECO:0000269" key="6">
    <source>
    </source>
</evidence>
<evidence type="ECO:0000269" key="7">
    <source>
    </source>
</evidence>
<evidence type="ECO:0000269" key="8">
    <source>
    </source>
</evidence>
<evidence type="ECO:0000269" key="9">
    <source>
    </source>
</evidence>
<evidence type="ECO:0000303" key="10">
    <source>
    </source>
</evidence>
<evidence type="ECO:0000303" key="11">
    <source>
    </source>
</evidence>
<evidence type="ECO:0000305" key="12"/>
<evidence type="ECO:0007829" key="13">
    <source>
        <dbReference type="PDB" id="2IYB"/>
    </source>
</evidence>
<evidence type="ECO:0007829" key="14">
    <source>
        <dbReference type="PDB" id="2XQN"/>
    </source>
</evidence>
<sequence length="421" mass="47996">MDLENKVKKMGLGHEQGFGAPCLKCKEKCEGFELHFWRKICRNCKCGQEEHDVLLSNEEDRKVGKLFEDTKYTTLIAKLKSDGIPMYKRNVMILTNPVAAKKNVSINTVTYEWAPPVQNQALARQYMQMLPKEKQPVAGSEGAQYRKKQLAKQLPAHDQDPSKCHELSPREVKEMEQFVKKYKSEALGVGDVKLPCEMDAQGPKQMNIPGGDRSTPAAVGAMEDKSAEHKRTQYSCYCCKLSMKEGDPAIYAERAGYDKLWHPACFVCSTCHELLVDMIYFWKNEKLYCGRHYCDSEKPRCAGCDELIFSNEYTQAENQNWHLKHFCCFDCDSILAGEIYVMVNDKPVCKPCYVKNHAVVCQGCHNAIDPEVQRVTYNNFSWHASTECFLCSCCSKCLIGQKFMPVEGMVFCSVECKKRMS</sequence>
<feature type="chain" id="PRO_0000075906" description="Testin">
    <location>
        <begin position="1"/>
        <end position="421"/>
    </location>
</feature>
<feature type="domain" description="PET" evidence="2">
    <location>
        <begin position="92"/>
        <end position="199"/>
    </location>
</feature>
<feature type="domain" description="LIM zinc-binding 1" evidence="1">
    <location>
        <begin position="234"/>
        <end position="297"/>
    </location>
</feature>
<feature type="domain" description="LIM zinc-binding 2" evidence="1">
    <location>
        <begin position="299"/>
        <end position="359"/>
    </location>
</feature>
<feature type="domain" description="LIM zinc-binding 3" evidence="1">
    <location>
        <begin position="362"/>
        <end position="421"/>
    </location>
</feature>
<feature type="region of interest" description="Disordered" evidence="3">
    <location>
        <begin position="133"/>
        <end position="164"/>
    </location>
</feature>
<feature type="compositionally biased region" description="Basic and acidic residues" evidence="3">
    <location>
        <begin position="155"/>
        <end position="164"/>
    </location>
</feature>
<feature type="splice variant" id="VSP_003122" description="In isoform 2." evidence="10 11">
    <location>
        <begin position="1"/>
        <end position="9"/>
    </location>
</feature>
<feature type="sequence variant" id="VAR_050170" description="In dbSNP:rs2272193.">
    <original>A</original>
    <variation>V</variation>
    <location>
        <position position="221"/>
    </location>
</feature>
<feature type="mutagenesis site" description="Abolishes interaction with ACTL7A." evidence="8">
    <original>C</original>
    <variation>A</variation>
    <location>
        <position position="328"/>
    </location>
</feature>
<feature type="mutagenesis site" description="Abolishes localization at focal adhesions." evidence="6">
    <original>C</original>
    <variation>A</variation>
    <location>
        <position position="391"/>
    </location>
</feature>
<feature type="sequence conflict" description="In Ref. 3; BAB13846." evidence="12" ref="3">
    <original>K</original>
    <variation>E</variation>
    <location>
        <position position="132"/>
    </location>
</feature>
<feature type="turn" evidence="14">
    <location>
        <begin position="302"/>
        <end position="304"/>
    </location>
</feature>
<feature type="strand" evidence="14">
    <location>
        <begin position="305"/>
        <end position="307"/>
    </location>
</feature>
<feature type="strand" evidence="14">
    <location>
        <begin position="313"/>
        <end position="316"/>
    </location>
</feature>
<feature type="strand" evidence="14">
    <location>
        <begin position="319"/>
        <end position="321"/>
    </location>
</feature>
<feature type="helix" evidence="14">
    <location>
        <begin position="323"/>
        <end position="325"/>
    </location>
</feature>
<feature type="turn" evidence="14">
    <location>
        <begin position="329"/>
        <end position="331"/>
    </location>
</feature>
<feature type="strand" evidence="14">
    <location>
        <begin position="338"/>
        <end position="343"/>
    </location>
</feature>
<feature type="strand" evidence="14">
    <location>
        <begin position="346"/>
        <end position="349"/>
    </location>
</feature>
<feature type="helix" evidence="14">
    <location>
        <begin position="350"/>
        <end position="356"/>
    </location>
</feature>
<feature type="turn" evidence="13">
    <location>
        <begin position="362"/>
        <end position="364"/>
    </location>
</feature>
<feature type="strand" evidence="13">
    <location>
        <begin position="365"/>
        <end position="368"/>
    </location>
</feature>
<feature type="strand" evidence="13">
    <location>
        <begin position="374"/>
        <end position="377"/>
    </location>
</feature>
<feature type="strand" evidence="13">
    <location>
        <begin position="380"/>
        <end position="383"/>
    </location>
</feature>
<feature type="turn" evidence="13">
    <location>
        <begin position="384"/>
        <end position="387"/>
    </location>
</feature>
<feature type="turn" evidence="13">
    <location>
        <begin position="392"/>
        <end position="394"/>
    </location>
</feature>
<feature type="strand" evidence="13">
    <location>
        <begin position="404"/>
        <end position="406"/>
    </location>
</feature>
<feature type="strand" evidence="13">
    <location>
        <begin position="409"/>
        <end position="413"/>
    </location>
</feature>
<feature type="helix" evidence="13">
    <location>
        <begin position="414"/>
        <end position="418"/>
    </location>
</feature>
<protein>
    <recommendedName>
        <fullName>Testin</fullName>
    </recommendedName>
    <alternativeName>
        <fullName>TESS</fullName>
    </alternativeName>
</protein>
<comment type="function">
    <text evidence="4 5 6">Scaffold protein that may play a role in cell adhesion, cell spreading and in the reorganization of the actin cytoskeleton. Plays a role in the regulation of cell proliferation. May act as a tumor suppressor. Inhibits tumor cell growth.</text>
</comment>
<comment type="subunit">
    <text evidence="5 6 7 8 9">Interacts via LIM domain 1 with ZYX. Interacts (via LIM domain 3) with ENAH and VASP. Interacts with ALKBH4, talin, actin, alpha-actinin, GRIP1 and PXN. Interacts (via LIM domain 2) with ACTL7A (via N-terminus). Heterodimer with ACTL7A; the heterodimer interacts with ENAH to form a heterotrimer.</text>
</comment>
<comment type="interaction">
    <interactant intactId="EBI-2561654">
        <id>Q9UGI8</id>
    </interactant>
    <interactant intactId="EBI-10825302">
        <id>Q9Y615</id>
        <label>ACTL7A</label>
    </interactant>
    <organismsDiffer>false</organismsDiffer>
    <experiments>9</experiments>
</comment>
<comment type="interaction">
    <interactant intactId="EBI-2561654">
        <id>Q9UGI8</id>
    </interactant>
    <interactant intactId="EBI-2834410">
        <id>Q8N8S7</id>
        <label>ENAH</label>
    </interactant>
    <organismsDiffer>false</organismsDiffer>
    <experiments>2</experiments>
</comment>
<comment type="interaction">
    <interactant intactId="EBI-2561654">
        <id>Q9UGI8</id>
    </interactant>
    <interactant intactId="EBI-5235340">
        <id>Q7Z699</id>
        <label>SPRED1</label>
    </interactant>
    <organismsDiffer>false</organismsDiffer>
    <experiments>3</experiments>
</comment>
<comment type="subcellular location">
    <subcellularLocation>
        <location>Cytoplasm</location>
    </subcellularLocation>
    <subcellularLocation>
        <location>Cell junction</location>
        <location>Focal adhesion</location>
    </subcellularLocation>
    <text>Detected along actin stress fibers.</text>
</comment>
<comment type="alternative products">
    <event type="alternative splicing"/>
    <isoform>
        <id>Q9UGI8-1</id>
        <name>1</name>
        <sequence type="displayed"/>
    </isoform>
    <isoform>
        <id>Q9UGI8-2</id>
        <name>2</name>
        <sequence type="described" ref="VSP_003122"/>
    </isoform>
</comment>
<comment type="tissue specificity">
    <text evidence="4">Ubiquitous.</text>
</comment>
<comment type="domain">
    <text evidence="6">The N-terminal and the C-terminal halves of the protein can associate with each other, thereby hindering interactions with ZYX.</text>
</comment>
<comment type="similarity">
    <text evidence="12">Belongs to the prickle / espinas / testin family.</text>
</comment>
<gene>
    <name type="primary">TES</name>
</gene>
<name>TES_HUMAN</name>
<keyword id="KW-0002">3D-structure</keyword>
<keyword id="KW-0025">Alternative splicing</keyword>
<keyword id="KW-0965">Cell junction</keyword>
<keyword id="KW-0963">Cytoplasm</keyword>
<keyword id="KW-0440">LIM domain</keyword>
<keyword id="KW-0479">Metal-binding</keyword>
<keyword id="KW-1267">Proteomics identification</keyword>
<keyword id="KW-1185">Reference proteome</keyword>
<keyword id="KW-0677">Repeat</keyword>
<keyword id="KW-0862">Zinc</keyword>
<dbReference type="EMBL" id="AF260225">
    <property type="protein sequence ID" value="AAG17635.1"/>
    <property type="molecule type" value="Genomic_DNA"/>
</dbReference>
<dbReference type="EMBL" id="AF260225">
    <property type="protein sequence ID" value="AAG17636.1"/>
    <property type="molecule type" value="Genomic_DNA"/>
</dbReference>
<dbReference type="EMBL" id="AF245356">
    <property type="protein sequence ID" value="AAG17612.1"/>
    <property type="molecule type" value="mRNA"/>
</dbReference>
<dbReference type="EMBL" id="AF245357">
    <property type="protein sequence ID" value="AAG17613.1"/>
    <property type="molecule type" value="mRNA"/>
</dbReference>
<dbReference type="EMBL" id="AJ250865">
    <property type="protein sequence ID" value="CAB65119.1"/>
    <property type="molecule type" value="mRNA"/>
</dbReference>
<dbReference type="EMBL" id="AK021575">
    <property type="protein sequence ID" value="BAB13846.1"/>
    <property type="molecule type" value="mRNA"/>
</dbReference>
<dbReference type="EMBL" id="AK291802">
    <property type="protein sequence ID" value="BAF84491.1"/>
    <property type="molecule type" value="mRNA"/>
</dbReference>
<dbReference type="EMBL" id="AC073130">
    <property type="protein sequence ID" value="AAQ93367.1"/>
    <property type="molecule type" value="Genomic_DNA"/>
</dbReference>
<dbReference type="EMBL" id="CH236947">
    <property type="protein sequence ID" value="EAL24365.1"/>
    <property type="molecule type" value="Genomic_DNA"/>
</dbReference>
<dbReference type="EMBL" id="BC001451">
    <property type="protein sequence ID" value="AAH01451.1"/>
    <property type="molecule type" value="mRNA"/>
</dbReference>
<dbReference type="CCDS" id="CCDS5763.1">
    <molecule id="Q9UGI8-1"/>
</dbReference>
<dbReference type="CCDS" id="CCDS5764.1">
    <molecule id="Q9UGI8-2"/>
</dbReference>
<dbReference type="RefSeq" id="NP_056456.1">
    <molecule id="Q9UGI8-1"/>
    <property type="nucleotide sequence ID" value="NM_015641.4"/>
</dbReference>
<dbReference type="RefSeq" id="NP_690042.1">
    <molecule id="Q9UGI8-2"/>
    <property type="nucleotide sequence ID" value="NM_152829.3"/>
</dbReference>
<dbReference type="PDB" id="2IYB">
    <property type="method" value="X-ray"/>
    <property type="resolution" value="2.35 A"/>
    <property type="chains" value="E/F/G/H=357-421"/>
</dbReference>
<dbReference type="PDB" id="2XQN">
    <property type="method" value="X-ray"/>
    <property type="resolution" value="2.62 A"/>
    <property type="chains" value="T=296-421"/>
</dbReference>
<dbReference type="PDBsum" id="2IYB"/>
<dbReference type="PDBsum" id="2XQN"/>
<dbReference type="SMR" id="Q9UGI8"/>
<dbReference type="BioGRID" id="117572">
    <property type="interactions" value="345"/>
</dbReference>
<dbReference type="FunCoup" id="Q9UGI8">
    <property type="interactions" value="942"/>
</dbReference>
<dbReference type="IntAct" id="Q9UGI8">
    <property type="interactions" value="68"/>
</dbReference>
<dbReference type="MINT" id="Q9UGI8"/>
<dbReference type="STRING" id="9606.ENSP00000350937"/>
<dbReference type="ChEMBL" id="CHEMBL5465364"/>
<dbReference type="GlyGen" id="Q9UGI8">
    <property type="glycosylation" value="1 site, 1 O-linked glycan (1 site)"/>
</dbReference>
<dbReference type="iPTMnet" id="Q9UGI8"/>
<dbReference type="MetOSite" id="Q9UGI8"/>
<dbReference type="PhosphoSitePlus" id="Q9UGI8"/>
<dbReference type="SwissPalm" id="Q9UGI8"/>
<dbReference type="BioMuta" id="TES"/>
<dbReference type="DMDM" id="17380320"/>
<dbReference type="jPOST" id="Q9UGI8"/>
<dbReference type="MassIVE" id="Q9UGI8"/>
<dbReference type="PaxDb" id="9606-ENSP00000350937"/>
<dbReference type="PeptideAtlas" id="Q9UGI8"/>
<dbReference type="ProteomicsDB" id="84218">
    <molecule id="Q9UGI8-1"/>
</dbReference>
<dbReference type="ProteomicsDB" id="84219">
    <molecule id="Q9UGI8-2"/>
</dbReference>
<dbReference type="Pumba" id="Q9UGI8"/>
<dbReference type="Antibodypedia" id="2972">
    <property type="antibodies" value="187 antibodies from 26 providers"/>
</dbReference>
<dbReference type="DNASU" id="26136"/>
<dbReference type="Ensembl" id="ENST00000358204.9">
    <molecule id="Q9UGI8-1"/>
    <property type="protein sequence ID" value="ENSP00000350937.4"/>
    <property type="gene ID" value="ENSG00000135269.18"/>
</dbReference>
<dbReference type="Ensembl" id="ENST00000393481.6">
    <molecule id="Q9UGI8-2"/>
    <property type="protein sequence ID" value="ENSP00000377121.2"/>
    <property type="gene ID" value="ENSG00000135269.18"/>
</dbReference>
<dbReference type="GeneID" id="26136"/>
<dbReference type="KEGG" id="hsa:26136"/>
<dbReference type="MANE-Select" id="ENST00000358204.9">
    <property type="protein sequence ID" value="ENSP00000350937.4"/>
    <property type="RefSeq nucleotide sequence ID" value="NM_015641.4"/>
    <property type="RefSeq protein sequence ID" value="NP_056456.1"/>
</dbReference>
<dbReference type="UCSC" id="uc003vho.3">
    <molecule id="Q9UGI8-1"/>
    <property type="organism name" value="human"/>
</dbReference>
<dbReference type="AGR" id="HGNC:14620"/>
<dbReference type="CTD" id="26136"/>
<dbReference type="DisGeNET" id="26136"/>
<dbReference type="GeneCards" id="TES"/>
<dbReference type="HGNC" id="HGNC:14620">
    <property type="gene designation" value="TES"/>
</dbReference>
<dbReference type="HPA" id="ENSG00000135269">
    <property type="expression patterns" value="Tissue enhanced (seminal)"/>
</dbReference>
<dbReference type="MIM" id="606085">
    <property type="type" value="gene"/>
</dbReference>
<dbReference type="neXtProt" id="NX_Q9UGI8"/>
<dbReference type="OpenTargets" id="ENSG00000135269"/>
<dbReference type="PharmGKB" id="PA37906"/>
<dbReference type="VEuPathDB" id="HostDB:ENSG00000135269"/>
<dbReference type="eggNOG" id="KOG1704">
    <property type="taxonomic scope" value="Eukaryota"/>
</dbReference>
<dbReference type="GeneTree" id="ENSGT00940000155993"/>
<dbReference type="HOGENOM" id="CLU_008937_1_1_1"/>
<dbReference type="InParanoid" id="Q9UGI8"/>
<dbReference type="OMA" id="NFSCHQC"/>
<dbReference type="OrthoDB" id="10069167at2759"/>
<dbReference type="PAN-GO" id="Q9UGI8">
    <property type="GO annotations" value="0 GO annotations based on evolutionary models"/>
</dbReference>
<dbReference type="PhylomeDB" id="Q9UGI8"/>
<dbReference type="TreeFam" id="TF313265"/>
<dbReference type="PathwayCommons" id="Q9UGI8"/>
<dbReference type="SignaLink" id="Q9UGI8"/>
<dbReference type="BioGRID-ORCS" id="26136">
    <property type="hits" value="10 hits in 1152 CRISPR screens"/>
</dbReference>
<dbReference type="ChiTaRS" id="TES">
    <property type="organism name" value="human"/>
</dbReference>
<dbReference type="EvolutionaryTrace" id="Q9UGI8"/>
<dbReference type="GeneWiki" id="Testin"/>
<dbReference type="GenomeRNAi" id="26136"/>
<dbReference type="Pharos" id="Q9UGI8">
    <property type="development level" value="Tbio"/>
</dbReference>
<dbReference type="PRO" id="PR:Q9UGI8"/>
<dbReference type="Proteomes" id="UP000005640">
    <property type="component" value="Chromosome 7"/>
</dbReference>
<dbReference type="RNAct" id="Q9UGI8">
    <property type="molecule type" value="protein"/>
</dbReference>
<dbReference type="Bgee" id="ENSG00000135269">
    <property type="expression patterns" value="Expressed in cauda epididymis and 187 other cell types or tissues"/>
</dbReference>
<dbReference type="ExpressionAtlas" id="Q9UGI8">
    <property type="expression patterns" value="baseline and differential"/>
</dbReference>
<dbReference type="GO" id="GO:0030054">
    <property type="term" value="C:cell junction"/>
    <property type="evidence" value="ECO:0000314"/>
    <property type="project" value="HPA"/>
</dbReference>
<dbReference type="GO" id="GO:0005829">
    <property type="term" value="C:cytosol"/>
    <property type="evidence" value="ECO:0000314"/>
    <property type="project" value="HPA"/>
</dbReference>
<dbReference type="GO" id="GO:0005925">
    <property type="term" value="C:focal adhesion"/>
    <property type="evidence" value="ECO:0000314"/>
    <property type="project" value="HPA"/>
</dbReference>
<dbReference type="GO" id="GO:0005634">
    <property type="term" value="C:nucleus"/>
    <property type="evidence" value="ECO:0007005"/>
    <property type="project" value="UniProtKB"/>
</dbReference>
<dbReference type="GO" id="GO:0005886">
    <property type="term" value="C:plasma membrane"/>
    <property type="evidence" value="ECO:0000314"/>
    <property type="project" value="HPA"/>
</dbReference>
<dbReference type="GO" id="GO:0032991">
    <property type="term" value="C:protein-containing complex"/>
    <property type="evidence" value="ECO:0000314"/>
    <property type="project" value="UniProtKB"/>
</dbReference>
<dbReference type="GO" id="GO:0045296">
    <property type="term" value="F:cadherin binding"/>
    <property type="evidence" value="ECO:0007005"/>
    <property type="project" value="BHF-UCL"/>
</dbReference>
<dbReference type="GO" id="GO:0003723">
    <property type="term" value="F:RNA binding"/>
    <property type="evidence" value="ECO:0007005"/>
    <property type="project" value="UniProtKB"/>
</dbReference>
<dbReference type="GO" id="GO:0008270">
    <property type="term" value="F:zinc ion binding"/>
    <property type="evidence" value="ECO:0000314"/>
    <property type="project" value="UniProtKB"/>
</dbReference>
<dbReference type="GO" id="GO:0008285">
    <property type="term" value="P:negative regulation of cell population proliferation"/>
    <property type="evidence" value="ECO:0000315"/>
    <property type="project" value="UniProtKB"/>
</dbReference>
<dbReference type="CDD" id="cd09413">
    <property type="entry name" value="LIM1_Testin"/>
    <property type="match status" value="1"/>
</dbReference>
<dbReference type="CDD" id="cd09416">
    <property type="entry name" value="LIM2_Testin"/>
    <property type="match status" value="1"/>
</dbReference>
<dbReference type="CDD" id="cd09419">
    <property type="entry name" value="LIM3_Testin"/>
    <property type="match status" value="1"/>
</dbReference>
<dbReference type="CDD" id="cd09829">
    <property type="entry name" value="PET_testin"/>
    <property type="match status" value="1"/>
</dbReference>
<dbReference type="FunFam" id="2.10.110.10:FF:000061">
    <property type="entry name" value="Testin"/>
    <property type="match status" value="1"/>
</dbReference>
<dbReference type="FunFam" id="2.10.110.10:FF:000065">
    <property type="entry name" value="Testin"/>
    <property type="match status" value="1"/>
</dbReference>
<dbReference type="FunFam" id="2.10.110.10:FF:000005">
    <property type="entry name" value="Testin isoform 1"/>
    <property type="match status" value="1"/>
</dbReference>
<dbReference type="Gene3D" id="2.10.110.10">
    <property type="entry name" value="Cysteine Rich Protein"/>
    <property type="match status" value="3"/>
</dbReference>
<dbReference type="IDEAL" id="IID00684"/>
<dbReference type="InterPro" id="IPR034958">
    <property type="entry name" value="LIM1_Testin"/>
</dbReference>
<dbReference type="InterPro" id="IPR034959">
    <property type="entry name" value="LIM2_Testin"/>
</dbReference>
<dbReference type="InterPro" id="IPR034960">
    <property type="entry name" value="LIM3_Testin"/>
</dbReference>
<dbReference type="InterPro" id="IPR010442">
    <property type="entry name" value="PET_domain"/>
</dbReference>
<dbReference type="InterPro" id="IPR033724">
    <property type="entry name" value="PET_testin"/>
</dbReference>
<dbReference type="InterPro" id="IPR047120">
    <property type="entry name" value="Pk/Esn/Tes"/>
</dbReference>
<dbReference type="InterPro" id="IPR001781">
    <property type="entry name" value="Znf_LIM"/>
</dbReference>
<dbReference type="PANTHER" id="PTHR24211">
    <property type="entry name" value="LIM DOMAIN-CONTAINING PROTEIN"/>
    <property type="match status" value="1"/>
</dbReference>
<dbReference type="PANTHER" id="PTHR24211:SF1">
    <property type="entry name" value="TESTIN"/>
    <property type="match status" value="1"/>
</dbReference>
<dbReference type="Pfam" id="PF00412">
    <property type="entry name" value="LIM"/>
    <property type="match status" value="3"/>
</dbReference>
<dbReference type="Pfam" id="PF06297">
    <property type="entry name" value="PET"/>
    <property type="match status" value="1"/>
</dbReference>
<dbReference type="SMART" id="SM00132">
    <property type="entry name" value="LIM"/>
    <property type="match status" value="3"/>
</dbReference>
<dbReference type="SUPFAM" id="SSF57716">
    <property type="entry name" value="Glucocorticoid receptor-like (DNA-binding domain)"/>
    <property type="match status" value="2"/>
</dbReference>
<dbReference type="PROSITE" id="PS00478">
    <property type="entry name" value="LIM_DOMAIN_1"/>
    <property type="match status" value="2"/>
</dbReference>
<dbReference type="PROSITE" id="PS50023">
    <property type="entry name" value="LIM_DOMAIN_2"/>
    <property type="match status" value="3"/>
</dbReference>
<dbReference type="PROSITE" id="PS51303">
    <property type="entry name" value="PET"/>
    <property type="match status" value="1"/>
</dbReference>
<proteinExistence type="evidence at protein level"/>
<organism>
    <name type="scientific">Homo sapiens</name>
    <name type="common">Human</name>
    <dbReference type="NCBI Taxonomy" id="9606"/>
    <lineage>
        <taxon>Eukaryota</taxon>
        <taxon>Metazoa</taxon>
        <taxon>Chordata</taxon>
        <taxon>Craniata</taxon>
        <taxon>Vertebrata</taxon>
        <taxon>Euteleostomi</taxon>
        <taxon>Mammalia</taxon>
        <taxon>Eutheria</taxon>
        <taxon>Euarchontoglires</taxon>
        <taxon>Primates</taxon>
        <taxon>Haplorrhini</taxon>
        <taxon>Catarrhini</taxon>
        <taxon>Hominidae</taxon>
        <taxon>Homo</taxon>
    </lineage>
</organism>